<name>OBG_DECAR</name>
<sequence length="363" mass="39422">MKFIDEAKIYIKAGDGGNGAATFRREKYIPMGGPNGGDGGRGGSIYAVADRNINTLVDYRYTRKFIGKRGENGGGADQYGAGGDDIILRMPVGTVIYNLNTEEIIADLSEHDQKVMIAKGGKGGLGNIHFKSSTNRAPRQKTNGEQGEELELRLELRVLADVGLLGLPNAGKSTLIRAISSARPKVADYPFTTLHPNLGVVRVDDEKSFVMADVPGLIEGAADGAGLGIRFLKHLQRTRILLHLVDIAPIDPDSDPVRDAKAIVGELIKHDPDLANKPRWLVLNKLDLIPEEDREAAVKNFIKAYKKATKYDGPVFPIAAINGEGTKPLIYAISEALEQMARPEIGDLDDNDEDSDEIIRDTE</sequence>
<evidence type="ECO:0000255" key="1">
    <source>
        <dbReference type="HAMAP-Rule" id="MF_01454"/>
    </source>
</evidence>
<evidence type="ECO:0000255" key="2">
    <source>
        <dbReference type="PROSITE-ProRule" id="PRU01231"/>
    </source>
</evidence>
<evidence type="ECO:0000256" key="3">
    <source>
        <dbReference type="SAM" id="MobiDB-lite"/>
    </source>
</evidence>
<feature type="chain" id="PRO_0000385874" description="GTPase Obg">
    <location>
        <begin position="1"/>
        <end position="363"/>
    </location>
</feature>
<feature type="domain" description="Obg" evidence="2">
    <location>
        <begin position="1"/>
        <end position="159"/>
    </location>
</feature>
<feature type="domain" description="OBG-type G" evidence="1">
    <location>
        <begin position="160"/>
        <end position="338"/>
    </location>
</feature>
<feature type="region of interest" description="Disordered" evidence="3">
    <location>
        <begin position="342"/>
        <end position="363"/>
    </location>
</feature>
<feature type="compositionally biased region" description="Acidic residues" evidence="3">
    <location>
        <begin position="346"/>
        <end position="356"/>
    </location>
</feature>
<feature type="binding site" evidence="1">
    <location>
        <begin position="166"/>
        <end position="173"/>
    </location>
    <ligand>
        <name>GTP</name>
        <dbReference type="ChEBI" id="CHEBI:37565"/>
    </ligand>
</feature>
<feature type="binding site" evidence="1">
    <location>
        <position position="173"/>
    </location>
    <ligand>
        <name>Mg(2+)</name>
        <dbReference type="ChEBI" id="CHEBI:18420"/>
    </ligand>
</feature>
<feature type="binding site" evidence="1">
    <location>
        <begin position="191"/>
        <end position="195"/>
    </location>
    <ligand>
        <name>GTP</name>
        <dbReference type="ChEBI" id="CHEBI:37565"/>
    </ligand>
</feature>
<feature type="binding site" evidence="1">
    <location>
        <position position="193"/>
    </location>
    <ligand>
        <name>Mg(2+)</name>
        <dbReference type="ChEBI" id="CHEBI:18420"/>
    </ligand>
</feature>
<feature type="binding site" evidence="1">
    <location>
        <begin position="213"/>
        <end position="216"/>
    </location>
    <ligand>
        <name>GTP</name>
        <dbReference type="ChEBI" id="CHEBI:37565"/>
    </ligand>
</feature>
<feature type="binding site" evidence="1">
    <location>
        <begin position="284"/>
        <end position="287"/>
    </location>
    <ligand>
        <name>GTP</name>
        <dbReference type="ChEBI" id="CHEBI:37565"/>
    </ligand>
</feature>
<feature type="binding site" evidence="1">
    <location>
        <begin position="319"/>
        <end position="321"/>
    </location>
    <ligand>
        <name>GTP</name>
        <dbReference type="ChEBI" id="CHEBI:37565"/>
    </ligand>
</feature>
<reference key="1">
    <citation type="journal article" date="2009" name="BMC Genomics">
        <title>Metabolic analysis of the soil microbe Dechloromonas aromatica str. RCB: indications of a surprisingly complex life-style and cryptic anaerobic pathways for aromatic degradation.</title>
        <authorList>
            <person name="Salinero K.K."/>
            <person name="Keller K."/>
            <person name="Feil W.S."/>
            <person name="Feil H."/>
            <person name="Trong S."/>
            <person name="Di Bartolo G."/>
            <person name="Lapidus A."/>
        </authorList>
    </citation>
    <scope>NUCLEOTIDE SEQUENCE [LARGE SCALE GENOMIC DNA]</scope>
    <source>
        <strain>RCB</strain>
    </source>
</reference>
<dbReference type="EC" id="3.6.5.-" evidence="1"/>
<dbReference type="EMBL" id="CP000089">
    <property type="protein sequence ID" value="AAZ48201.1"/>
    <property type="molecule type" value="Genomic_DNA"/>
</dbReference>
<dbReference type="SMR" id="Q47AD0"/>
<dbReference type="STRING" id="159087.Daro_3472"/>
<dbReference type="KEGG" id="dar:Daro_3472"/>
<dbReference type="eggNOG" id="COG0536">
    <property type="taxonomic scope" value="Bacteria"/>
</dbReference>
<dbReference type="HOGENOM" id="CLU_011747_2_0_4"/>
<dbReference type="OrthoDB" id="9807318at2"/>
<dbReference type="GO" id="GO:0005737">
    <property type="term" value="C:cytoplasm"/>
    <property type="evidence" value="ECO:0007669"/>
    <property type="project" value="UniProtKB-SubCell"/>
</dbReference>
<dbReference type="GO" id="GO:0005525">
    <property type="term" value="F:GTP binding"/>
    <property type="evidence" value="ECO:0007669"/>
    <property type="project" value="UniProtKB-UniRule"/>
</dbReference>
<dbReference type="GO" id="GO:0003924">
    <property type="term" value="F:GTPase activity"/>
    <property type="evidence" value="ECO:0007669"/>
    <property type="project" value="UniProtKB-UniRule"/>
</dbReference>
<dbReference type="GO" id="GO:0000287">
    <property type="term" value="F:magnesium ion binding"/>
    <property type="evidence" value="ECO:0007669"/>
    <property type="project" value="InterPro"/>
</dbReference>
<dbReference type="GO" id="GO:0042254">
    <property type="term" value="P:ribosome biogenesis"/>
    <property type="evidence" value="ECO:0007669"/>
    <property type="project" value="UniProtKB-UniRule"/>
</dbReference>
<dbReference type="CDD" id="cd01898">
    <property type="entry name" value="Obg"/>
    <property type="match status" value="1"/>
</dbReference>
<dbReference type="FunFam" id="2.70.210.12:FF:000001">
    <property type="entry name" value="GTPase Obg"/>
    <property type="match status" value="1"/>
</dbReference>
<dbReference type="Gene3D" id="2.70.210.12">
    <property type="entry name" value="GTP1/OBG domain"/>
    <property type="match status" value="1"/>
</dbReference>
<dbReference type="Gene3D" id="3.40.50.300">
    <property type="entry name" value="P-loop containing nucleotide triphosphate hydrolases"/>
    <property type="match status" value="1"/>
</dbReference>
<dbReference type="HAMAP" id="MF_01454">
    <property type="entry name" value="GTPase_Obg"/>
    <property type="match status" value="1"/>
</dbReference>
<dbReference type="InterPro" id="IPR031167">
    <property type="entry name" value="G_OBG"/>
</dbReference>
<dbReference type="InterPro" id="IPR006073">
    <property type="entry name" value="GTP-bd"/>
</dbReference>
<dbReference type="InterPro" id="IPR014100">
    <property type="entry name" value="GTP-bd_Obg/CgtA"/>
</dbReference>
<dbReference type="InterPro" id="IPR006074">
    <property type="entry name" value="GTP1-OBG_CS"/>
</dbReference>
<dbReference type="InterPro" id="IPR006169">
    <property type="entry name" value="GTP1_OBG_dom"/>
</dbReference>
<dbReference type="InterPro" id="IPR036726">
    <property type="entry name" value="GTP1_OBG_dom_sf"/>
</dbReference>
<dbReference type="InterPro" id="IPR045086">
    <property type="entry name" value="OBG_GTPase"/>
</dbReference>
<dbReference type="InterPro" id="IPR027417">
    <property type="entry name" value="P-loop_NTPase"/>
</dbReference>
<dbReference type="NCBIfam" id="TIGR02729">
    <property type="entry name" value="Obg_CgtA"/>
    <property type="match status" value="1"/>
</dbReference>
<dbReference type="NCBIfam" id="NF008955">
    <property type="entry name" value="PRK12297.1"/>
    <property type="match status" value="1"/>
</dbReference>
<dbReference type="NCBIfam" id="NF008956">
    <property type="entry name" value="PRK12299.1"/>
    <property type="match status" value="1"/>
</dbReference>
<dbReference type="PANTHER" id="PTHR11702">
    <property type="entry name" value="DEVELOPMENTALLY REGULATED GTP-BINDING PROTEIN-RELATED"/>
    <property type="match status" value="1"/>
</dbReference>
<dbReference type="PANTHER" id="PTHR11702:SF31">
    <property type="entry name" value="MITOCHONDRIAL RIBOSOME-ASSOCIATED GTPASE 2"/>
    <property type="match status" value="1"/>
</dbReference>
<dbReference type="Pfam" id="PF01018">
    <property type="entry name" value="GTP1_OBG"/>
    <property type="match status" value="1"/>
</dbReference>
<dbReference type="Pfam" id="PF01926">
    <property type="entry name" value="MMR_HSR1"/>
    <property type="match status" value="1"/>
</dbReference>
<dbReference type="PIRSF" id="PIRSF002401">
    <property type="entry name" value="GTP_bd_Obg/CgtA"/>
    <property type="match status" value="1"/>
</dbReference>
<dbReference type="PRINTS" id="PR00326">
    <property type="entry name" value="GTP1OBG"/>
</dbReference>
<dbReference type="SUPFAM" id="SSF82051">
    <property type="entry name" value="Obg GTP-binding protein N-terminal domain"/>
    <property type="match status" value="1"/>
</dbReference>
<dbReference type="SUPFAM" id="SSF52540">
    <property type="entry name" value="P-loop containing nucleoside triphosphate hydrolases"/>
    <property type="match status" value="1"/>
</dbReference>
<dbReference type="PROSITE" id="PS51710">
    <property type="entry name" value="G_OBG"/>
    <property type="match status" value="1"/>
</dbReference>
<dbReference type="PROSITE" id="PS00905">
    <property type="entry name" value="GTP1_OBG"/>
    <property type="match status" value="1"/>
</dbReference>
<dbReference type="PROSITE" id="PS51883">
    <property type="entry name" value="OBG"/>
    <property type="match status" value="1"/>
</dbReference>
<accession>Q47AD0</accession>
<protein>
    <recommendedName>
        <fullName evidence="1">GTPase Obg</fullName>
        <ecNumber evidence="1">3.6.5.-</ecNumber>
    </recommendedName>
    <alternativeName>
        <fullName evidence="1">GTP-binding protein Obg</fullName>
    </alternativeName>
</protein>
<keyword id="KW-0963">Cytoplasm</keyword>
<keyword id="KW-0342">GTP-binding</keyword>
<keyword id="KW-0378">Hydrolase</keyword>
<keyword id="KW-0460">Magnesium</keyword>
<keyword id="KW-0479">Metal-binding</keyword>
<keyword id="KW-0547">Nucleotide-binding</keyword>
<gene>
    <name evidence="1" type="primary">obg</name>
    <name type="ordered locus">Daro_3472</name>
</gene>
<organism>
    <name type="scientific">Dechloromonas aromatica (strain RCB)</name>
    <dbReference type="NCBI Taxonomy" id="159087"/>
    <lineage>
        <taxon>Bacteria</taxon>
        <taxon>Pseudomonadati</taxon>
        <taxon>Pseudomonadota</taxon>
        <taxon>Betaproteobacteria</taxon>
        <taxon>Rhodocyclales</taxon>
        <taxon>Azonexaceae</taxon>
        <taxon>Dechloromonas</taxon>
    </lineage>
</organism>
<proteinExistence type="inferred from homology"/>
<comment type="function">
    <text evidence="1">An essential GTPase which binds GTP, GDP and possibly (p)ppGpp with moderate affinity, with high nucleotide exchange rates and a fairly low GTP hydrolysis rate. Plays a role in control of the cell cycle, stress response, ribosome biogenesis and in those bacteria that undergo differentiation, in morphogenesis control.</text>
</comment>
<comment type="cofactor">
    <cofactor evidence="1">
        <name>Mg(2+)</name>
        <dbReference type="ChEBI" id="CHEBI:18420"/>
    </cofactor>
</comment>
<comment type="subunit">
    <text evidence="1">Monomer.</text>
</comment>
<comment type="subcellular location">
    <subcellularLocation>
        <location evidence="1">Cytoplasm</location>
    </subcellularLocation>
</comment>
<comment type="similarity">
    <text evidence="1">Belongs to the TRAFAC class OBG-HflX-like GTPase superfamily. OBG GTPase family.</text>
</comment>